<protein>
    <recommendedName>
        <fullName>Corticoliberin</fullName>
    </recommendedName>
    <alternativeName>
        <fullName>Corticotropin-releasing factor</fullName>
        <shortName>CRF</shortName>
    </alternativeName>
    <alternativeName>
        <fullName>Corticotropin-releasing hormone</fullName>
    </alternativeName>
</protein>
<feature type="signal peptide" evidence="5">
    <location>
        <begin position="1"/>
        <end position="24"/>
    </location>
</feature>
<feature type="propeptide" id="PRO_0000006210" evidence="1">
    <location>
        <begin position="25"/>
        <end position="153"/>
    </location>
</feature>
<feature type="peptide" id="PRO_0000006211" description="Corticoliberin">
    <location>
        <begin position="154"/>
        <end position="194"/>
    </location>
</feature>
<feature type="region of interest" description="Disordered" evidence="6">
    <location>
        <begin position="122"/>
        <end position="158"/>
    </location>
</feature>
<feature type="compositionally biased region" description="Basic and acidic residues" evidence="6">
    <location>
        <begin position="146"/>
        <end position="156"/>
    </location>
</feature>
<feature type="modified residue" description="Isoleucine amide" evidence="1">
    <location>
        <position position="194"/>
    </location>
</feature>
<reference key="1">
    <citation type="submission" date="2004-02" db="EMBL/GenBank/DDBJ databases">
        <title>PCR cloning of dog corticotropin releasing hormone gene.</title>
        <authorList>
            <person name="Kansaku N."/>
            <person name="Yamagishi K."/>
            <person name="Mizushima S."/>
        </authorList>
    </citation>
    <scope>NUCLEOTIDE SEQUENCE [GENOMIC DNA]</scope>
</reference>
<reference key="2">
    <citation type="journal article" date="1994" name="Neuropeptides">
        <title>Predicted primary and antigenic structure of canine corticotropin releasing hormone.</title>
        <authorList>
            <person name="Mol J.A."/>
            <person name="van Wolferen M."/>
            <person name="Kwant M."/>
            <person name="Meloen R."/>
        </authorList>
    </citation>
    <scope>PRELIMINARY NUCLEOTIDE SEQUENCE [GENOMIC DNA] OF 73-196</scope>
    <scope>TISSUE SPECIFICITY</scope>
    <source>
        <strain>Mongrel</strain>
        <tissue>Blood</tissue>
    </source>
</reference>
<gene>
    <name type="primary">CRH</name>
</gene>
<name>CRF_CANLF</name>
<proteinExistence type="evidence at transcript level"/>
<accession>P49926</accession>
<accession>Q75QJ9</accession>
<keyword id="KW-0027">Amidation</keyword>
<keyword id="KW-0165">Cleavage on pair of basic residues</keyword>
<keyword id="KW-0372">Hormone</keyword>
<keyword id="KW-1185">Reference proteome</keyword>
<keyword id="KW-0964">Secreted</keyword>
<keyword id="KW-0732">Signal</keyword>
<comment type="function">
    <text evidence="2 4">Hormone regulating the release of corticotropin from pituitary gland (By similarity). Induces NLRP6 in intestinal epithelial cells, hence may influence gut microbiota profile (By similarity).</text>
</comment>
<comment type="subunit">
    <text evidence="3">Interacts (via C-terminus) with CRFR1 (via N-terminal extracellular domain).</text>
</comment>
<comment type="subcellular location">
    <subcellularLocation>
        <location evidence="2">Secreted</location>
    </subcellularLocation>
</comment>
<comment type="tissue specificity">
    <text evidence="7">Produced by the hypothalamus.</text>
</comment>
<comment type="similarity">
    <text evidence="8">Belongs to the sauvagine/corticotropin-releasing factor/urotensin I family.</text>
</comment>
<comment type="sequence caution" evidence="8">
    <conflict type="frameshift">
        <sequence resource="EMBL-CDS" id="AAB32322"/>
    </conflict>
</comment>
<comment type="sequence caution" evidence="8">
    <conflict type="miscellaneous discrepancy">
        <sequence resource="EMBL-CDS" id="AAB32322"/>
    </conflict>
    <text>Sequencing errors.</text>
</comment>
<sequence length="196" mass="21547">MRLPLLLSAGVLLVVSLPCPPCRALLSRGPIPGARQAAQHPQPLDFFQLPPQPQQPQQPQARPVLYRMGEEYFLRLGNLNKSPAAPLLPASSPVAGGSGSRLSPDEAAANFFRALLQQLPLPRRQLDSPAGPAERGEENALGSRQETPERERRSEEPPISLDLTFHLLREVLEMARAEQLAQQAHSNRKLMEIIGK</sequence>
<dbReference type="EMBL" id="AB162117">
    <property type="protein sequence ID" value="BAD10983.1"/>
    <property type="molecule type" value="Genomic_DNA"/>
</dbReference>
<dbReference type="EMBL" id="S74126">
    <property type="protein sequence ID" value="AAB32322.1"/>
    <property type="status" value="ALT_SEQ"/>
    <property type="molecule type" value="Genomic_DNA"/>
</dbReference>
<dbReference type="PIR" id="I46994">
    <property type="entry name" value="I46994"/>
</dbReference>
<dbReference type="FunCoup" id="P49926">
    <property type="interactions" value="42"/>
</dbReference>
<dbReference type="STRING" id="9615.ENSCAFP00000040748"/>
<dbReference type="PaxDb" id="9612-ENSCAFP00000040748"/>
<dbReference type="eggNOG" id="ENOG502S25G">
    <property type="taxonomic scope" value="Eukaryota"/>
</dbReference>
<dbReference type="InParanoid" id="P49926"/>
<dbReference type="OrthoDB" id="9837731at2759"/>
<dbReference type="Proteomes" id="UP000002254">
    <property type="component" value="Unplaced"/>
</dbReference>
<dbReference type="Proteomes" id="UP000694429">
    <property type="component" value="Unplaced"/>
</dbReference>
<dbReference type="Proteomes" id="UP000694542">
    <property type="component" value="Unplaced"/>
</dbReference>
<dbReference type="Proteomes" id="UP000805418">
    <property type="component" value="Unplaced"/>
</dbReference>
<dbReference type="GO" id="GO:0005615">
    <property type="term" value="C:extracellular space"/>
    <property type="evidence" value="ECO:0000318"/>
    <property type="project" value="GO_Central"/>
</dbReference>
<dbReference type="GO" id="GO:0017045">
    <property type="term" value="F:corticotropin-releasing hormone activity"/>
    <property type="evidence" value="ECO:0000318"/>
    <property type="project" value="GO_Central"/>
</dbReference>
<dbReference type="GO" id="GO:0032811">
    <property type="term" value="P:negative regulation of epinephrine secretion"/>
    <property type="evidence" value="ECO:0000318"/>
    <property type="project" value="GO_Central"/>
</dbReference>
<dbReference type="GO" id="GO:0070093">
    <property type="term" value="P:negative regulation of glucagon secretion"/>
    <property type="evidence" value="ECO:0000318"/>
    <property type="project" value="GO_Central"/>
</dbReference>
<dbReference type="GO" id="GO:0051464">
    <property type="term" value="P:positive regulation of cortisol secretion"/>
    <property type="evidence" value="ECO:0000318"/>
    <property type="project" value="GO_Central"/>
</dbReference>
<dbReference type="Gene3D" id="6.10.250.1920">
    <property type="match status" value="1"/>
</dbReference>
<dbReference type="InterPro" id="IPR018446">
    <property type="entry name" value="Corticotropin-releasing_fac_CS"/>
</dbReference>
<dbReference type="InterPro" id="IPR000187">
    <property type="entry name" value="CRF"/>
</dbReference>
<dbReference type="InterPro" id="IPR003620">
    <property type="entry name" value="Urocortin_CRF"/>
</dbReference>
<dbReference type="PANTHER" id="PTHR15035:SF9">
    <property type="entry name" value="CORTICOLIBERIN"/>
    <property type="match status" value="1"/>
</dbReference>
<dbReference type="PANTHER" id="PTHR15035">
    <property type="entry name" value="CORTICOLIBERIN/UROCORTIN"/>
    <property type="match status" value="1"/>
</dbReference>
<dbReference type="Pfam" id="PF00473">
    <property type="entry name" value="CRF"/>
    <property type="match status" value="1"/>
</dbReference>
<dbReference type="PRINTS" id="PR01612">
    <property type="entry name" value="CRFFAMILY"/>
</dbReference>
<dbReference type="SMART" id="SM00039">
    <property type="entry name" value="CRF"/>
    <property type="match status" value="1"/>
</dbReference>
<dbReference type="PROSITE" id="PS00511">
    <property type="entry name" value="CRF"/>
    <property type="match status" value="1"/>
</dbReference>
<evidence type="ECO:0000250" key="1"/>
<evidence type="ECO:0000250" key="2">
    <source>
        <dbReference type="UniProtKB" id="P06296"/>
    </source>
</evidence>
<evidence type="ECO:0000250" key="3">
    <source>
        <dbReference type="UniProtKB" id="P06850"/>
    </source>
</evidence>
<evidence type="ECO:0000250" key="4">
    <source>
        <dbReference type="UniProtKB" id="Q8CIT0"/>
    </source>
</evidence>
<evidence type="ECO:0000255" key="5"/>
<evidence type="ECO:0000256" key="6">
    <source>
        <dbReference type="SAM" id="MobiDB-lite"/>
    </source>
</evidence>
<evidence type="ECO:0000269" key="7">
    <source>
    </source>
</evidence>
<evidence type="ECO:0000305" key="8"/>
<organism>
    <name type="scientific">Canis lupus familiaris</name>
    <name type="common">Dog</name>
    <name type="synonym">Canis familiaris</name>
    <dbReference type="NCBI Taxonomy" id="9615"/>
    <lineage>
        <taxon>Eukaryota</taxon>
        <taxon>Metazoa</taxon>
        <taxon>Chordata</taxon>
        <taxon>Craniata</taxon>
        <taxon>Vertebrata</taxon>
        <taxon>Euteleostomi</taxon>
        <taxon>Mammalia</taxon>
        <taxon>Eutheria</taxon>
        <taxon>Laurasiatheria</taxon>
        <taxon>Carnivora</taxon>
        <taxon>Caniformia</taxon>
        <taxon>Canidae</taxon>
        <taxon>Canis</taxon>
    </lineage>
</organism>